<organism>
    <name type="scientific">Escherichia coli O127:H6 (strain E2348/69 / EPEC)</name>
    <dbReference type="NCBI Taxonomy" id="574521"/>
    <lineage>
        <taxon>Bacteria</taxon>
        <taxon>Pseudomonadati</taxon>
        <taxon>Pseudomonadota</taxon>
        <taxon>Gammaproteobacteria</taxon>
        <taxon>Enterobacterales</taxon>
        <taxon>Enterobacteriaceae</taxon>
        <taxon>Escherichia</taxon>
    </lineage>
</organism>
<feature type="chain" id="PRO_1000147167" description="Protein FdhE">
    <location>
        <begin position="1"/>
        <end position="309"/>
    </location>
</feature>
<evidence type="ECO:0000255" key="1">
    <source>
        <dbReference type="HAMAP-Rule" id="MF_00611"/>
    </source>
</evidence>
<sequence>MSIRIIPQDELGSSEKRTADMIPPLLFPRLKNLYNRRAERLRELAENNPLGDYLRFAALIAHAQEVVLYDHPLEMDLTARIKEASAQGKPPLDIHVLPRDKHWQKLLMALIAELKPEMSGPALAVIENLEKASTQELEDMASALFASDFSSVSSDKAPFIWAALSLYWAQMANLIPGKARAEYGEQRQYCPVCGSMPVSSMVQIGTTQGLRYLRCNLCETEWHVVRVKCSNCEQSGKLHYWSLDDEQAAIKAESCDDCGTYLKILYQEKEPKVEAVADDLASLVLDARMEQEGYARSSINPFLFPGEGE</sequence>
<gene>
    <name evidence="1" type="primary">fdhE</name>
    <name type="ordered locus">E2348C_4194</name>
</gene>
<proteinExistence type="inferred from homology"/>
<comment type="function">
    <text evidence="1">Necessary for formate dehydrogenase activity.</text>
</comment>
<comment type="subcellular location">
    <subcellularLocation>
        <location evidence="1">Cytoplasm</location>
    </subcellularLocation>
</comment>
<comment type="similarity">
    <text evidence="1">Belongs to the FdhE family.</text>
</comment>
<keyword id="KW-0963">Cytoplasm</keyword>
<keyword id="KW-1185">Reference proteome</keyword>
<dbReference type="EMBL" id="FM180568">
    <property type="protein sequence ID" value="CAS11742.1"/>
    <property type="molecule type" value="Genomic_DNA"/>
</dbReference>
<dbReference type="RefSeq" id="WP_000027712.1">
    <property type="nucleotide sequence ID" value="NC_011601.1"/>
</dbReference>
<dbReference type="SMR" id="B7UNL0"/>
<dbReference type="KEGG" id="ecg:E2348C_4194"/>
<dbReference type="HOGENOM" id="CLU_055275_0_0_6"/>
<dbReference type="Proteomes" id="UP000008205">
    <property type="component" value="Chromosome"/>
</dbReference>
<dbReference type="GO" id="GO:0005829">
    <property type="term" value="C:cytosol"/>
    <property type="evidence" value="ECO:0007669"/>
    <property type="project" value="TreeGrafter"/>
</dbReference>
<dbReference type="GO" id="GO:0008199">
    <property type="term" value="F:ferric iron binding"/>
    <property type="evidence" value="ECO:0007669"/>
    <property type="project" value="TreeGrafter"/>
</dbReference>
<dbReference type="GO" id="GO:0051604">
    <property type="term" value="P:protein maturation"/>
    <property type="evidence" value="ECO:0007669"/>
    <property type="project" value="TreeGrafter"/>
</dbReference>
<dbReference type="CDD" id="cd16341">
    <property type="entry name" value="FdhE"/>
    <property type="match status" value="1"/>
</dbReference>
<dbReference type="FunFam" id="3.90.1670.10:FF:000001">
    <property type="entry name" value="Protein FdhE"/>
    <property type="match status" value="1"/>
</dbReference>
<dbReference type="Gene3D" id="3.90.1670.10">
    <property type="entry name" value="FdhE-like domain"/>
    <property type="match status" value="1"/>
</dbReference>
<dbReference type="HAMAP" id="MF_00611">
    <property type="entry name" value="FdeH"/>
    <property type="match status" value="1"/>
</dbReference>
<dbReference type="InterPro" id="IPR024064">
    <property type="entry name" value="FdhE-like_sf"/>
</dbReference>
<dbReference type="InterPro" id="IPR056796">
    <property type="entry name" value="FdhE_C"/>
</dbReference>
<dbReference type="InterPro" id="IPR056797">
    <property type="entry name" value="FdhE_central"/>
</dbReference>
<dbReference type="InterPro" id="IPR056774">
    <property type="entry name" value="FdhE_N"/>
</dbReference>
<dbReference type="InterPro" id="IPR006452">
    <property type="entry name" value="Formate_DH_accessory"/>
</dbReference>
<dbReference type="NCBIfam" id="TIGR01562">
    <property type="entry name" value="FdhE"/>
    <property type="match status" value="1"/>
</dbReference>
<dbReference type="NCBIfam" id="NF002925">
    <property type="entry name" value="PRK03564.1"/>
    <property type="match status" value="1"/>
</dbReference>
<dbReference type="PANTHER" id="PTHR37689">
    <property type="entry name" value="PROTEIN FDHE"/>
    <property type="match status" value="1"/>
</dbReference>
<dbReference type="PANTHER" id="PTHR37689:SF1">
    <property type="entry name" value="PROTEIN FDHE"/>
    <property type="match status" value="1"/>
</dbReference>
<dbReference type="Pfam" id="PF24860">
    <property type="entry name" value="FdhE_C"/>
    <property type="match status" value="1"/>
</dbReference>
<dbReference type="Pfam" id="PF24859">
    <property type="entry name" value="FdhE_central"/>
    <property type="match status" value="1"/>
</dbReference>
<dbReference type="Pfam" id="PF04216">
    <property type="entry name" value="FdhE_N"/>
    <property type="match status" value="1"/>
</dbReference>
<dbReference type="PIRSF" id="PIRSF018296">
    <property type="entry name" value="Format_dh_formtn"/>
    <property type="match status" value="1"/>
</dbReference>
<dbReference type="SUPFAM" id="SSF144020">
    <property type="entry name" value="FdhE-like"/>
    <property type="match status" value="1"/>
</dbReference>
<reference key="1">
    <citation type="journal article" date="2009" name="J. Bacteriol.">
        <title>Complete genome sequence and comparative genome analysis of enteropathogenic Escherichia coli O127:H6 strain E2348/69.</title>
        <authorList>
            <person name="Iguchi A."/>
            <person name="Thomson N.R."/>
            <person name="Ogura Y."/>
            <person name="Saunders D."/>
            <person name="Ooka T."/>
            <person name="Henderson I.R."/>
            <person name="Harris D."/>
            <person name="Asadulghani M."/>
            <person name="Kurokawa K."/>
            <person name="Dean P."/>
            <person name="Kenny B."/>
            <person name="Quail M.A."/>
            <person name="Thurston S."/>
            <person name="Dougan G."/>
            <person name="Hayashi T."/>
            <person name="Parkhill J."/>
            <person name="Frankel G."/>
        </authorList>
    </citation>
    <scope>NUCLEOTIDE SEQUENCE [LARGE SCALE GENOMIC DNA]</scope>
    <source>
        <strain>E2348/69 / EPEC</strain>
    </source>
</reference>
<name>FDHE_ECO27</name>
<protein>
    <recommendedName>
        <fullName evidence="1">Protein FdhE</fullName>
    </recommendedName>
</protein>
<accession>B7UNL0</accession>